<sequence length="148" mass="16346">MSIWVDADACPGVIKELLFRAAERTRTPLILVANQPVRVPRSRYVRRVQVAPGFDVADNEIVRCVEPGDLVITADIPLAAEVIAKGAHALNPRGERYTTSNIKARLNMRDFMDTLRASGVDTGGAPAMSQRDRQAFANELDRFLTANR</sequence>
<comment type="similarity">
    <text evidence="1">Belongs to the UPF0178 family.</text>
</comment>
<keyword id="KW-1185">Reference proteome</keyword>
<evidence type="ECO:0000255" key="1">
    <source>
        <dbReference type="HAMAP-Rule" id="MF_00489"/>
    </source>
</evidence>
<gene>
    <name type="ordered locus">Mlg_1612</name>
</gene>
<proteinExistence type="inferred from homology"/>
<name>Y1612_ALKEH</name>
<reference key="1">
    <citation type="submission" date="2006-08" db="EMBL/GenBank/DDBJ databases">
        <title>Complete sequence of Alkalilimnicola ehrilichei MLHE-1.</title>
        <authorList>
            <person name="Copeland A."/>
            <person name="Lucas S."/>
            <person name="Lapidus A."/>
            <person name="Barry K."/>
            <person name="Detter J.C."/>
            <person name="Glavina del Rio T."/>
            <person name="Hammon N."/>
            <person name="Israni S."/>
            <person name="Dalin E."/>
            <person name="Tice H."/>
            <person name="Pitluck S."/>
            <person name="Sims D."/>
            <person name="Brettin T."/>
            <person name="Bruce D."/>
            <person name="Han C."/>
            <person name="Tapia R."/>
            <person name="Gilna P."/>
            <person name="Schmutz J."/>
            <person name="Larimer F."/>
            <person name="Land M."/>
            <person name="Hauser L."/>
            <person name="Kyrpides N."/>
            <person name="Mikhailova N."/>
            <person name="Oremland R.S."/>
            <person name="Hoeft S.E."/>
            <person name="Switzer-Blum J."/>
            <person name="Kulp T."/>
            <person name="King G."/>
            <person name="Tabita R."/>
            <person name="Witte B."/>
            <person name="Santini J.M."/>
            <person name="Basu P."/>
            <person name="Hollibaugh J.T."/>
            <person name="Xie G."/>
            <person name="Stolz J.F."/>
            <person name="Richardson P."/>
        </authorList>
    </citation>
    <scope>NUCLEOTIDE SEQUENCE [LARGE SCALE GENOMIC DNA]</scope>
    <source>
        <strain>ATCC BAA-1101 / DSM 17681 / MLHE-1</strain>
    </source>
</reference>
<organism>
    <name type="scientific">Alkalilimnicola ehrlichii (strain ATCC BAA-1101 / DSM 17681 / MLHE-1)</name>
    <dbReference type="NCBI Taxonomy" id="187272"/>
    <lineage>
        <taxon>Bacteria</taxon>
        <taxon>Pseudomonadati</taxon>
        <taxon>Pseudomonadota</taxon>
        <taxon>Gammaproteobacteria</taxon>
        <taxon>Chromatiales</taxon>
        <taxon>Ectothiorhodospiraceae</taxon>
        <taxon>Alkalilimnicola</taxon>
    </lineage>
</organism>
<accession>Q0A879</accession>
<protein>
    <recommendedName>
        <fullName evidence="1">UPF0178 protein Mlg_1612</fullName>
    </recommendedName>
</protein>
<feature type="chain" id="PRO_1000014409" description="UPF0178 protein Mlg_1612">
    <location>
        <begin position="1"/>
        <end position="148"/>
    </location>
</feature>
<dbReference type="EMBL" id="CP000453">
    <property type="protein sequence ID" value="ABI56958.1"/>
    <property type="molecule type" value="Genomic_DNA"/>
</dbReference>
<dbReference type="RefSeq" id="WP_011629352.1">
    <property type="nucleotide sequence ID" value="NC_008340.1"/>
</dbReference>
<dbReference type="KEGG" id="aeh:Mlg_1612"/>
<dbReference type="eggNOG" id="COG1671">
    <property type="taxonomic scope" value="Bacteria"/>
</dbReference>
<dbReference type="HOGENOM" id="CLU_106619_2_1_6"/>
<dbReference type="OrthoDB" id="9798918at2"/>
<dbReference type="Proteomes" id="UP000001962">
    <property type="component" value="Chromosome"/>
</dbReference>
<dbReference type="CDD" id="cd18720">
    <property type="entry name" value="PIN_YqxD-like"/>
    <property type="match status" value="1"/>
</dbReference>
<dbReference type="HAMAP" id="MF_00489">
    <property type="entry name" value="UPF0178"/>
    <property type="match status" value="1"/>
</dbReference>
<dbReference type="InterPro" id="IPR003791">
    <property type="entry name" value="UPF0178"/>
</dbReference>
<dbReference type="NCBIfam" id="NF001095">
    <property type="entry name" value="PRK00124.1"/>
    <property type="match status" value="1"/>
</dbReference>
<dbReference type="PANTHER" id="PTHR35146">
    <property type="entry name" value="UPF0178 PROTEIN YAII"/>
    <property type="match status" value="1"/>
</dbReference>
<dbReference type="PANTHER" id="PTHR35146:SF1">
    <property type="entry name" value="UPF0178 PROTEIN YAII"/>
    <property type="match status" value="1"/>
</dbReference>
<dbReference type="Pfam" id="PF02639">
    <property type="entry name" value="DUF188"/>
    <property type="match status" value="1"/>
</dbReference>